<name>AROQ_FUSNN</name>
<comment type="function">
    <text evidence="1">Catalyzes a trans-dehydration via an enolate intermediate.</text>
</comment>
<comment type="catalytic activity">
    <reaction evidence="1">
        <text>3-dehydroquinate = 3-dehydroshikimate + H2O</text>
        <dbReference type="Rhea" id="RHEA:21096"/>
        <dbReference type="ChEBI" id="CHEBI:15377"/>
        <dbReference type="ChEBI" id="CHEBI:16630"/>
        <dbReference type="ChEBI" id="CHEBI:32364"/>
        <dbReference type="EC" id="4.2.1.10"/>
    </reaction>
</comment>
<comment type="pathway">
    <text evidence="1">Metabolic intermediate biosynthesis; chorismate biosynthesis; chorismate from D-erythrose 4-phosphate and phosphoenolpyruvate: step 3/7.</text>
</comment>
<comment type="subunit">
    <text evidence="1">Homododecamer.</text>
</comment>
<comment type="similarity">
    <text evidence="1">Belongs to the type-II 3-dehydroquinase family.</text>
</comment>
<accession>Q8RH64</accession>
<proteinExistence type="inferred from homology"/>
<organism>
    <name type="scientific">Fusobacterium nucleatum subsp. nucleatum (strain ATCC 25586 / DSM 15643 / BCRC 10681 / CIP 101130 / JCM 8532 / KCTC 2640 / LMG 13131 / VPI 4355)</name>
    <dbReference type="NCBI Taxonomy" id="190304"/>
    <lineage>
        <taxon>Bacteria</taxon>
        <taxon>Fusobacteriati</taxon>
        <taxon>Fusobacteriota</taxon>
        <taxon>Fusobacteriia</taxon>
        <taxon>Fusobacteriales</taxon>
        <taxon>Fusobacteriaceae</taxon>
        <taxon>Fusobacterium</taxon>
    </lineage>
</organism>
<feature type="chain" id="PRO_0000159899" description="3-dehydroquinate dehydratase">
    <location>
        <begin position="1"/>
        <end position="147"/>
    </location>
</feature>
<feature type="active site" description="Proton acceptor" evidence="1">
    <location>
        <position position="22"/>
    </location>
</feature>
<feature type="active site" description="Proton donor" evidence="1">
    <location>
        <position position="102"/>
    </location>
</feature>
<feature type="binding site" evidence="1">
    <location>
        <position position="76"/>
    </location>
    <ligand>
        <name>substrate</name>
    </ligand>
</feature>
<feature type="binding site" evidence="1">
    <location>
        <position position="82"/>
    </location>
    <ligand>
        <name>substrate</name>
    </ligand>
</feature>
<feature type="binding site" evidence="1">
    <location>
        <position position="89"/>
    </location>
    <ligand>
        <name>substrate</name>
    </ligand>
</feature>
<feature type="binding site" evidence="1">
    <location>
        <begin position="103"/>
        <end position="104"/>
    </location>
    <ligand>
        <name>substrate</name>
    </ligand>
</feature>
<feature type="binding site" evidence="1">
    <location>
        <position position="113"/>
    </location>
    <ligand>
        <name>substrate</name>
    </ligand>
</feature>
<feature type="site" description="Transition state stabilizer" evidence="1">
    <location>
        <position position="17"/>
    </location>
</feature>
<sequence>MKIMVINGPNLNMLGIREKNIYGTFSYDDLCKYIKDYPEYKDKNIEFEFLQSNVEGEIVNFIQEAYSKKYDGIILNAGGYTHTSVAIHDAIKAVSIPTVEVHISNIHAREDFRKVCVTSPACIGQITGLGKLGYILAVVYLIEYYNK</sequence>
<gene>
    <name evidence="1" type="primary">aroQ</name>
    <name type="ordered locus">FN0046</name>
</gene>
<reference key="1">
    <citation type="journal article" date="2002" name="J. Bacteriol.">
        <title>Genome sequence and analysis of the oral bacterium Fusobacterium nucleatum strain ATCC 25586.</title>
        <authorList>
            <person name="Kapatral V."/>
            <person name="Anderson I."/>
            <person name="Ivanova N."/>
            <person name="Reznik G."/>
            <person name="Los T."/>
            <person name="Lykidis A."/>
            <person name="Bhattacharyya A."/>
            <person name="Bartman A."/>
            <person name="Gardner W."/>
            <person name="Grechkin G."/>
            <person name="Zhu L."/>
            <person name="Vasieva O."/>
            <person name="Chu L."/>
            <person name="Kogan Y."/>
            <person name="Chaga O."/>
            <person name="Goltsman E."/>
            <person name="Bernal A."/>
            <person name="Larsen N."/>
            <person name="D'Souza M."/>
            <person name="Walunas T."/>
            <person name="Pusch G."/>
            <person name="Haselkorn R."/>
            <person name="Fonstein M."/>
            <person name="Kyrpides N.C."/>
            <person name="Overbeek R."/>
        </authorList>
    </citation>
    <scope>NUCLEOTIDE SEQUENCE [LARGE SCALE GENOMIC DNA]</scope>
    <source>
        <strain>ATCC 25586 / DSM 15643 / BCRC 10681 / CIP 101130 / JCM 8532 / KCTC 2640 / LMG 13131 / VPI 4355</strain>
    </source>
</reference>
<keyword id="KW-0028">Amino-acid biosynthesis</keyword>
<keyword id="KW-0057">Aromatic amino acid biosynthesis</keyword>
<keyword id="KW-0456">Lyase</keyword>
<keyword id="KW-1185">Reference proteome</keyword>
<evidence type="ECO:0000255" key="1">
    <source>
        <dbReference type="HAMAP-Rule" id="MF_00169"/>
    </source>
</evidence>
<dbReference type="EC" id="4.2.1.10" evidence="1"/>
<dbReference type="EMBL" id="AE009951">
    <property type="protein sequence ID" value="AAL94259.1"/>
    <property type="molecule type" value="Genomic_DNA"/>
</dbReference>
<dbReference type="RefSeq" id="NP_602960.1">
    <property type="nucleotide sequence ID" value="NC_003454.1"/>
</dbReference>
<dbReference type="RefSeq" id="WP_005903558.1">
    <property type="nucleotide sequence ID" value="NZ_OZ209243.1"/>
</dbReference>
<dbReference type="SMR" id="Q8RH64"/>
<dbReference type="FunCoup" id="Q8RH64">
    <property type="interactions" value="131"/>
</dbReference>
<dbReference type="STRING" id="190304.FN0046"/>
<dbReference type="PaxDb" id="190304-FN0046"/>
<dbReference type="EnsemblBacteria" id="AAL94259">
    <property type="protein sequence ID" value="AAL94259"/>
    <property type="gene ID" value="FN0046"/>
</dbReference>
<dbReference type="GeneID" id="79782823"/>
<dbReference type="KEGG" id="fnu:FN0046"/>
<dbReference type="PATRIC" id="fig|190304.8.peg.639"/>
<dbReference type="eggNOG" id="COG0757">
    <property type="taxonomic scope" value="Bacteria"/>
</dbReference>
<dbReference type="HOGENOM" id="CLU_090968_3_0_0"/>
<dbReference type="InParanoid" id="Q8RH64"/>
<dbReference type="BioCyc" id="FNUC190304:G1FZS-659-MONOMER"/>
<dbReference type="UniPathway" id="UPA00053">
    <property type="reaction ID" value="UER00086"/>
</dbReference>
<dbReference type="Proteomes" id="UP000002521">
    <property type="component" value="Chromosome"/>
</dbReference>
<dbReference type="GO" id="GO:0003855">
    <property type="term" value="F:3-dehydroquinate dehydratase activity"/>
    <property type="evidence" value="ECO:0000318"/>
    <property type="project" value="GO_Central"/>
</dbReference>
<dbReference type="GO" id="GO:0008652">
    <property type="term" value="P:amino acid biosynthetic process"/>
    <property type="evidence" value="ECO:0007669"/>
    <property type="project" value="UniProtKB-KW"/>
</dbReference>
<dbReference type="GO" id="GO:0009073">
    <property type="term" value="P:aromatic amino acid family biosynthetic process"/>
    <property type="evidence" value="ECO:0007669"/>
    <property type="project" value="UniProtKB-KW"/>
</dbReference>
<dbReference type="GO" id="GO:0009423">
    <property type="term" value="P:chorismate biosynthetic process"/>
    <property type="evidence" value="ECO:0007669"/>
    <property type="project" value="UniProtKB-UniRule"/>
</dbReference>
<dbReference type="GO" id="GO:0019631">
    <property type="term" value="P:quinate catabolic process"/>
    <property type="evidence" value="ECO:0000318"/>
    <property type="project" value="GO_Central"/>
</dbReference>
<dbReference type="CDD" id="cd00466">
    <property type="entry name" value="DHQase_II"/>
    <property type="match status" value="1"/>
</dbReference>
<dbReference type="Gene3D" id="3.40.50.9100">
    <property type="entry name" value="Dehydroquinase, class II"/>
    <property type="match status" value="1"/>
</dbReference>
<dbReference type="HAMAP" id="MF_00169">
    <property type="entry name" value="AroQ"/>
    <property type="match status" value="1"/>
</dbReference>
<dbReference type="InterPro" id="IPR001874">
    <property type="entry name" value="DHquinase_II"/>
</dbReference>
<dbReference type="InterPro" id="IPR018509">
    <property type="entry name" value="DHquinase_II_CS"/>
</dbReference>
<dbReference type="InterPro" id="IPR036441">
    <property type="entry name" value="DHquinase_II_sf"/>
</dbReference>
<dbReference type="NCBIfam" id="TIGR01088">
    <property type="entry name" value="aroQ"/>
    <property type="match status" value="1"/>
</dbReference>
<dbReference type="NCBIfam" id="NF003805">
    <property type="entry name" value="PRK05395.1-2"/>
    <property type="match status" value="1"/>
</dbReference>
<dbReference type="NCBIfam" id="NF003806">
    <property type="entry name" value="PRK05395.1-3"/>
    <property type="match status" value="1"/>
</dbReference>
<dbReference type="NCBIfam" id="NF003807">
    <property type="entry name" value="PRK05395.1-4"/>
    <property type="match status" value="1"/>
</dbReference>
<dbReference type="PANTHER" id="PTHR21272">
    <property type="entry name" value="CATABOLIC 3-DEHYDROQUINASE"/>
    <property type="match status" value="1"/>
</dbReference>
<dbReference type="PANTHER" id="PTHR21272:SF3">
    <property type="entry name" value="CATABOLIC 3-DEHYDROQUINASE"/>
    <property type="match status" value="1"/>
</dbReference>
<dbReference type="Pfam" id="PF01220">
    <property type="entry name" value="DHquinase_II"/>
    <property type="match status" value="1"/>
</dbReference>
<dbReference type="PIRSF" id="PIRSF001399">
    <property type="entry name" value="DHquinase_II"/>
    <property type="match status" value="1"/>
</dbReference>
<dbReference type="SUPFAM" id="SSF52304">
    <property type="entry name" value="Type II 3-dehydroquinate dehydratase"/>
    <property type="match status" value="1"/>
</dbReference>
<dbReference type="PROSITE" id="PS01029">
    <property type="entry name" value="DEHYDROQUINASE_II"/>
    <property type="match status" value="1"/>
</dbReference>
<protein>
    <recommendedName>
        <fullName evidence="1">3-dehydroquinate dehydratase</fullName>
        <shortName evidence="1">3-dehydroquinase</shortName>
        <ecNumber evidence="1">4.2.1.10</ecNumber>
    </recommendedName>
    <alternativeName>
        <fullName evidence="1">Type II DHQase</fullName>
    </alternativeName>
</protein>